<dbReference type="EMBL" id="L77117">
    <property type="protein sequence ID" value="AAB98255.1"/>
    <property type="molecule type" value="Genomic_DNA"/>
</dbReference>
<dbReference type="PIR" id="E64333">
    <property type="entry name" value="E64333"/>
</dbReference>
<dbReference type="RefSeq" id="WP_010869765.1">
    <property type="nucleotide sequence ID" value="NC_000909.1"/>
</dbReference>
<dbReference type="SMR" id="Q57716"/>
<dbReference type="FunCoup" id="Q57716">
    <property type="interactions" value="95"/>
</dbReference>
<dbReference type="STRING" id="243232.MJ_0268"/>
<dbReference type="PaxDb" id="243232-MJ_0268"/>
<dbReference type="EnsemblBacteria" id="AAB98255">
    <property type="protein sequence ID" value="AAB98255"/>
    <property type="gene ID" value="MJ_0268"/>
</dbReference>
<dbReference type="GeneID" id="1451122"/>
<dbReference type="KEGG" id="mja:MJ_0268"/>
<dbReference type="eggNOG" id="arCOG01605">
    <property type="taxonomic scope" value="Archaea"/>
</dbReference>
<dbReference type="HOGENOM" id="CLU_139698_1_1_2"/>
<dbReference type="InParanoid" id="Q57716"/>
<dbReference type="OrthoDB" id="23478at2157"/>
<dbReference type="PhylomeDB" id="Q57716"/>
<dbReference type="Proteomes" id="UP000000805">
    <property type="component" value="Chromosome"/>
</dbReference>
<dbReference type="GO" id="GO:0051539">
    <property type="term" value="F:4 iron, 4 sulfur cluster binding"/>
    <property type="evidence" value="ECO:0007669"/>
    <property type="project" value="UniProtKB-KW"/>
</dbReference>
<dbReference type="GO" id="GO:0046872">
    <property type="term" value="F:metal ion binding"/>
    <property type="evidence" value="ECO:0007669"/>
    <property type="project" value="UniProtKB-KW"/>
</dbReference>
<dbReference type="GO" id="GO:0016625">
    <property type="term" value="F:oxidoreductase activity, acting on the aldehyde or oxo group of donors, iron-sulfur protein as acceptor"/>
    <property type="evidence" value="ECO:0007669"/>
    <property type="project" value="InterPro"/>
</dbReference>
<dbReference type="Gene3D" id="3.30.70.20">
    <property type="match status" value="2"/>
</dbReference>
<dbReference type="InterPro" id="IPR017896">
    <property type="entry name" value="4Fe4S_Fe-S-bd"/>
</dbReference>
<dbReference type="InterPro" id="IPR017900">
    <property type="entry name" value="4Fe4S_Fe_S_CS"/>
</dbReference>
<dbReference type="InterPro" id="IPR011898">
    <property type="entry name" value="PorD_KorD"/>
</dbReference>
<dbReference type="InterPro" id="IPR053389">
    <property type="entry name" value="Pyruvate_synthase_PorD"/>
</dbReference>
<dbReference type="NCBIfam" id="NF040684">
    <property type="entry name" value="PorD_Arch"/>
    <property type="match status" value="1"/>
</dbReference>
<dbReference type="NCBIfam" id="TIGR02179">
    <property type="entry name" value="PorD_KorD"/>
    <property type="match status" value="1"/>
</dbReference>
<dbReference type="PANTHER" id="PTHR43724">
    <property type="entry name" value="PYRUVATE SYNTHASE SUBUNIT PORD"/>
    <property type="match status" value="1"/>
</dbReference>
<dbReference type="PANTHER" id="PTHR43724:SF2">
    <property type="entry name" value="PYRUVATE SYNTHASE SUBUNIT PORD"/>
    <property type="match status" value="1"/>
</dbReference>
<dbReference type="Pfam" id="PF14697">
    <property type="entry name" value="Fer4_21"/>
    <property type="match status" value="1"/>
</dbReference>
<dbReference type="SUPFAM" id="SSF54862">
    <property type="entry name" value="4Fe-4S ferredoxins"/>
    <property type="match status" value="1"/>
</dbReference>
<dbReference type="PROSITE" id="PS00198">
    <property type="entry name" value="4FE4S_FER_1"/>
    <property type="match status" value="2"/>
</dbReference>
<dbReference type="PROSITE" id="PS51379">
    <property type="entry name" value="4FE4S_FER_2"/>
    <property type="match status" value="2"/>
</dbReference>
<name>PORD_METJA</name>
<proteinExistence type="inferred from homology"/>
<feature type="chain" id="PRO_0000099918" description="Pyruvate synthase subunit PorD">
    <location>
        <begin position="1"/>
        <end position="86"/>
    </location>
</feature>
<feature type="domain" description="4Fe-4S ferredoxin-type 1" evidence="2">
    <location>
        <begin position="25"/>
        <end position="54"/>
    </location>
</feature>
<feature type="domain" description="4Fe-4S ferredoxin-type 2" evidence="2">
    <location>
        <begin position="55"/>
        <end position="84"/>
    </location>
</feature>
<feature type="binding site" evidence="1">
    <location>
        <position position="34"/>
    </location>
    <ligand>
        <name>[4Fe-4S] cluster</name>
        <dbReference type="ChEBI" id="CHEBI:49883"/>
        <label>1</label>
    </ligand>
</feature>
<feature type="binding site" evidence="1">
    <location>
        <position position="37"/>
    </location>
    <ligand>
        <name>[4Fe-4S] cluster</name>
        <dbReference type="ChEBI" id="CHEBI:49883"/>
        <label>1</label>
    </ligand>
</feature>
<feature type="binding site" evidence="1">
    <location>
        <position position="40"/>
    </location>
    <ligand>
        <name>[4Fe-4S] cluster</name>
        <dbReference type="ChEBI" id="CHEBI:49883"/>
        <label>1</label>
    </ligand>
</feature>
<feature type="binding site" evidence="1">
    <location>
        <position position="44"/>
    </location>
    <ligand>
        <name>[4Fe-4S] cluster</name>
        <dbReference type="ChEBI" id="CHEBI:49883"/>
        <label>2</label>
    </ligand>
</feature>
<feature type="binding site" evidence="1">
    <location>
        <position position="64"/>
    </location>
    <ligand>
        <name>[4Fe-4S] cluster</name>
        <dbReference type="ChEBI" id="CHEBI:49883"/>
        <label>2</label>
    </ligand>
</feature>
<feature type="binding site" evidence="1">
    <location>
        <position position="67"/>
    </location>
    <ligand>
        <name>[4Fe-4S] cluster</name>
        <dbReference type="ChEBI" id="CHEBI:49883"/>
        <label>2</label>
    </ligand>
</feature>
<feature type="binding site" evidence="1">
    <location>
        <position position="70"/>
    </location>
    <ligand>
        <name>[4Fe-4S] cluster</name>
        <dbReference type="ChEBI" id="CHEBI:49883"/>
        <label>2</label>
    </ligand>
</feature>
<feature type="binding site" evidence="1">
    <location>
        <position position="74"/>
    </location>
    <ligand>
        <name>[4Fe-4S] cluster</name>
        <dbReference type="ChEBI" id="CHEBI:49883"/>
        <label>1</label>
    </ligand>
</feature>
<reference key="1">
    <citation type="journal article" date="1996" name="Science">
        <title>Complete genome sequence of the methanogenic archaeon, Methanococcus jannaschii.</title>
        <authorList>
            <person name="Bult C.J."/>
            <person name="White O."/>
            <person name="Olsen G.J."/>
            <person name="Zhou L."/>
            <person name="Fleischmann R.D."/>
            <person name="Sutton G.G."/>
            <person name="Blake J.A."/>
            <person name="FitzGerald L.M."/>
            <person name="Clayton R.A."/>
            <person name="Gocayne J.D."/>
            <person name="Kerlavage A.R."/>
            <person name="Dougherty B.A."/>
            <person name="Tomb J.-F."/>
            <person name="Adams M.D."/>
            <person name="Reich C.I."/>
            <person name="Overbeek R."/>
            <person name="Kirkness E.F."/>
            <person name="Weinstock K.G."/>
            <person name="Merrick J.M."/>
            <person name="Glodek A."/>
            <person name="Scott J.L."/>
            <person name="Geoghagen N.S.M."/>
            <person name="Weidman J.F."/>
            <person name="Fuhrmann J.L."/>
            <person name="Nguyen D."/>
            <person name="Utterback T.R."/>
            <person name="Kelley J.M."/>
            <person name="Peterson J.D."/>
            <person name="Sadow P.W."/>
            <person name="Hanna M.C."/>
            <person name="Cotton M.D."/>
            <person name="Roberts K.M."/>
            <person name="Hurst M.A."/>
            <person name="Kaine B.P."/>
            <person name="Borodovsky M."/>
            <person name="Klenk H.-P."/>
            <person name="Fraser C.M."/>
            <person name="Smith H.O."/>
            <person name="Woese C.R."/>
            <person name="Venter J.C."/>
        </authorList>
    </citation>
    <scope>NUCLEOTIDE SEQUENCE [LARGE SCALE GENOMIC DNA]</scope>
    <source>
        <strain>ATCC 43067 / DSM 2661 / JAL-1 / JCM 10045 / NBRC 100440</strain>
    </source>
</reference>
<gene>
    <name type="primary">porD</name>
    <name type="ordered locus">MJ0268</name>
</gene>
<evidence type="ECO:0000250" key="1">
    <source>
        <dbReference type="UniProtKB" id="P94692"/>
    </source>
</evidence>
<evidence type="ECO:0000255" key="2">
    <source>
        <dbReference type="PROSITE-ProRule" id="PRU00711"/>
    </source>
</evidence>
<keyword id="KW-0004">4Fe-4S</keyword>
<keyword id="KW-0249">Electron transport</keyword>
<keyword id="KW-0408">Iron</keyword>
<keyword id="KW-0411">Iron-sulfur</keyword>
<keyword id="KW-0479">Metal-binding</keyword>
<keyword id="KW-1185">Reference proteome</keyword>
<keyword id="KW-0677">Repeat</keyword>
<keyword id="KW-0813">Transport</keyword>
<sequence length="86" mass="9848">MVTIAAIIYEPGNSIKNKTGTWRTFRPILDNEKCVKCENCYIFCPEGAIQEDENGNFKIDYDYCKGCLICMNECPVNAITKVREEK</sequence>
<protein>
    <recommendedName>
        <fullName>Pyruvate synthase subunit PorD</fullName>
    </recommendedName>
    <alternativeName>
        <fullName>Pyruvate oxidoreductase delta chain</fullName>
        <shortName>POR</shortName>
    </alternativeName>
    <alternativeName>
        <fullName>Pyruvic-ferredoxin oxidoreductase subunit delta</fullName>
    </alternativeName>
</protein>
<accession>Q57716</accession>
<comment type="cofactor">
    <cofactor evidence="1">
        <name>[4Fe-4S] cluster</name>
        <dbReference type="ChEBI" id="CHEBI:49883"/>
    </cofactor>
    <text evidence="1">Binds 2 [4Fe-4S] clusters.</text>
</comment>
<comment type="subunit">
    <text>Heterotetramer of one alpha, one beta, one delta and one gamma chain.</text>
</comment>
<organism>
    <name type="scientific">Methanocaldococcus jannaschii (strain ATCC 43067 / DSM 2661 / JAL-1 / JCM 10045 / NBRC 100440)</name>
    <name type="common">Methanococcus jannaschii</name>
    <dbReference type="NCBI Taxonomy" id="243232"/>
    <lineage>
        <taxon>Archaea</taxon>
        <taxon>Methanobacteriati</taxon>
        <taxon>Methanobacteriota</taxon>
        <taxon>Methanomada group</taxon>
        <taxon>Methanococci</taxon>
        <taxon>Methanococcales</taxon>
        <taxon>Methanocaldococcaceae</taxon>
        <taxon>Methanocaldococcus</taxon>
    </lineage>
</organism>